<comment type="function">
    <text evidence="1">Putative oxophytodienoate reductase that may be involved in the biosynthesis or metabolism of oxylipin signaling molecules.</text>
</comment>
<comment type="cofactor">
    <cofactor>
        <name>FMN</name>
        <dbReference type="ChEBI" id="CHEBI:58210"/>
    </cofactor>
</comment>
<comment type="similarity">
    <text evidence="2">Belongs to the NADH:flavin oxidoreductase/NADH oxidase family.</text>
</comment>
<organism>
    <name type="scientific">Oryza sativa subsp. japonica</name>
    <name type="common">Rice</name>
    <dbReference type="NCBI Taxonomy" id="39947"/>
    <lineage>
        <taxon>Eukaryota</taxon>
        <taxon>Viridiplantae</taxon>
        <taxon>Streptophyta</taxon>
        <taxon>Embryophyta</taxon>
        <taxon>Tracheophyta</taxon>
        <taxon>Spermatophyta</taxon>
        <taxon>Magnoliopsida</taxon>
        <taxon>Liliopsida</taxon>
        <taxon>Poales</taxon>
        <taxon>Poaceae</taxon>
        <taxon>BOP clade</taxon>
        <taxon>Oryzoideae</taxon>
        <taxon>Oryzeae</taxon>
        <taxon>Oryzinae</taxon>
        <taxon>Oryza</taxon>
        <taxon>Oryza sativa</taxon>
    </lineage>
</organism>
<reference key="1">
    <citation type="journal article" date="2005" name="Nature">
        <title>The map-based sequence of the rice genome.</title>
        <authorList>
            <consortium name="International rice genome sequencing project (IRGSP)"/>
        </authorList>
    </citation>
    <scope>NUCLEOTIDE SEQUENCE [LARGE SCALE GENOMIC DNA]</scope>
    <source>
        <strain>cv. Nipponbare</strain>
    </source>
</reference>
<reference key="2">
    <citation type="journal article" date="2008" name="Nucleic Acids Res.">
        <title>The rice annotation project database (RAP-DB): 2008 update.</title>
        <authorList>
            <consortium name="The rice annotation project (RAP)"/>
        </authorList>
    </citation>
    <scope>GENOME REANNOTATION</scope>
    <source>
        <strain>cv. Nipponbare</strain>
    </source>
</reference>
<reference key="3">
    <citation type="journal article" date="2013" name="Rice">
        <title>Improvement of the Oryza sativa Nipponbare reference genome using next generation sequence and optical map data.</title>
        <authorList>
            <person name="Kawahara Y."/>
            <person name="de la Bastide M."/>
            <person name="Hamilton J.P."/>
            <person name="Kanamori H."/>
            <person name="McCombie W.R."/>
            <person name="Ouyang S."/>
            <person name="Schwartz D.C."/>
            <person name="Tanaka T."/>
            <person name="Wu J."/>
            <person name="Zhou S."/>
            <person name="Childs K.L."/>
            <person name="Davidson R.M."/>
            <person name="Lin H."/>
            <person name="Quesada-Ocampo L."/>
            <person name="Vaillancourt B."/>
            <person name="Sakai H."/>
            <person name="Lee S.S."/>
            <person name="Kim J."/>
            <person name="Numa H."/>
            <person name="Itoh T."/>
            <person name="Buell C.R."/>
            <person name="Matsumoto T."/>
        </authorList>
    </citation>
    <scope>GENOME REANNOTATION</scope>
    <source>
        <strain>cv. Nipponbare</strain>
    </source>
</reference>
<reference key="4">
    <citation type="journal article" date="2003" name="Science">
        <title>Collection, mapping, and annotation of over 28,000 cDNA clones from japonica rice.</title>
        <authorList>
            <consortium name="The rice full-length cDNA consortium"/>
        </authorList>
    </citation>
    <scope>NUCLEOTIDE SEQUENCE [LARGE SCALE MRNA]</scope>
    <source>
        <strain>cv. Nipponbare</strain>
    </source>
</reference>
<evidence type="ECO:0000250" key="1"/>
<evidence type="ECO:0000305" key="2"/>
<keyword id="KW-0275">Fatty acid biosynthesis</keyword>
<keyword id="KW-0276">Fatty acid metabolism</keyword>
<keyword id="KW-0285">Flavoprotein</keyword>
<keyword id="KW-0288">FMN</keyword>
<keyword id="KW-0444">Lipid biosynthesis</keyword>
<keyword id="KW-0443">Lipid metabolism</keyword>
<keyword id="KW-0521">NADP</keyword>
<keyword id="KW-0560">Oxidoreductase</keyword>
<keyword id="KW-0925">Oxylipin biosynthesis</keyword>
<keyword id="KW-1185">Reference proteome</keyword>
<feature type="chain" id="PRO_0000410716" description="Putative 12-oxophytodienoate reductase 10">
    <location>
        <begin position="1"/>
        <end position="317"/>
    </location>
</feature>
<feature type="active site" description="Proton donor" evidence="1">
    <location>
        <position position="122"/>
    </location>
</feature>
<feature type="binding site" evidence="1">
    <location>
        <begin position="26"/>
        <end position="28"/>
    </location>
    <ligand>
        <name>FMN</name>
        <dbReference type="ChEBI" id="CHEBI:58210"/>
    </ligand>
</feature>
<feature type="binding site" evidence="1">
    <location>
        <begin position="117"/>
        <end position="120"/>
    </location>
    <ligand>
        <name>substrate</name>
    </ligand>
</feature>
<feature type="binding site" evidence="1">
    <location>
        <position position="169"/>
    </location>
    <ligand>
        <name>FMN</name>
        <dbReference type="ChEBI" id="CHEBI:58210"/>
    </ligand>
</feature>
<feature type="binding site" evidence="1">
    <location>
        <position position="209"/>
    </location>
    <ligand>
        <name>substrate</name>
    </ligand>
</feature>
<feature type="binding site" evidence="1">
    <location>
        <position position="244"/>
    </location>
    <ligand>
        <name>FMN</name>
        <dbReference type="ChEBI" id="CHEBI:58210"/>
    </ligand>
</feature>
<feature type="binding site" evidence="1">
    <location>
        <begin position="265"/>
        <end position="266"/>
    </location>
    <ligand>
        <name>FMN</name>
        <dbReference type="ChEBI" id="CHEBI:58210"/>
    </ligand>
</feature>
<protein>
    <recommendedName>
        <fullName>Putative 12-oxophytodienoate reductase 10</fullName>
        <ecNumber>1.3.1.-</ecNumber>
    </recommendedName>
    <alternativeName>
        <fullName>OPDA-reductase 10</fullName>
        <shortName>OsOPR10</shortName>
    </alternativeName>
</protein>
<name>OPR10_ORYSJ</name>
<gene>
    <name type="primary">OPR10</name>
    <name type="synonym">OPR12</name>
    <name type="ordered locus">Os01g0369900</name>
    <name type="ordered locus">LOC_Os01g27230</name>
</gene>
<dbReference type="EC" id="1.3.1.-"/>
<dbReference type="EMBL" id="AP008207">
    <property type="protein sequence ID" value="BAF04968.1"/>
    <property type="molecule type" value="Genomic_DNA"/>
</dbReference>
<dbReference type="EMBL" id="AP014957">
    <property type="status" value="NOT_ANNOTATED_CDS"/>
    <property type="molecule type" value="Genomic_DNA"/>
</dbReference>
<dbReference type="EMBL" id="AK100034">
    <property type="protein sequence ID" value="BAG94407.1"/>
    <property type="molecule type" value="mRNA"/>
</dbReference>
<dbReference type="SMR" id="Q0JMR0"/>
<dbReference type="FunCoup" id="Q0JMR0">
    <property type="interactions" value="130"/>
</dbReference>
<dbReference type="STRING" id="39947.Q0JMR0"/>
<dbReference type="PaxDb" id="39947-Q0JMR0"/>
<dbReference type="KEGG" id="dosa:Os01g0369900"/>
<dbReference type="InParanoid" id="Q0JMR0"/>
<dbReference type="Proteomes" id="UP000000763">
    <property type="component" value="Chromosome 1"/>
</dbReference>
<dbReference type="Proteomes" id="UP000059680">
    <property type="component" value="Chromosome 1"/>
</dbReference>
<dbReference type="GO" id="GO:0010181">
    <property type="term" value="F:FMN binding"/>
    <property type="evidence" value="ECO:0007669"/>
    <property type="project" value="InterPro"/>
</dbReference>
<dbReference type="GO" id="GO:0016491">
    <property type="term" value="F:oxidoreductase activity"/>
    <property type="evidence" value="ECO:0000318"/>
    <property type="project" value="GO_Central"/>
</dbReference>
<dbReference type="GO" id="GO:0006633">
    <property type="term" value="P:fatty acid biosynthetic process"/>
    <property type="evidence" value="ECO:0007669"/>
    <property type="project" value="UniProtKB-KW"/>
</dbReference>
<dbReference type="GO" id="GO:0031408">
    <property type="term" value="P:oxylipin biosynthetic process"/>
    <property type="evidence" value="ECO:0007669"/>
    <property type="project" value="UniProtKB-KW"/>
</dbReference>
<dbReference type="FunFam" id="3.20.20.70:FF:000402">
    <property type="entry name" value="Putative 12-oxophytodienoate reductase 10"/>
    <property type="match status" value="1"/>
</dbReference>
<dbReference type="Gene3D" id="3.20.20.70">
    <property type="entry name" value="Aldolase class I"/>
    <property type="match status" value="1"/>
</dbReference>
<dbReference type="InterPro" id="IPR013785">
    <property type="entry name" value="Aldolase_TIM"/>
</dbReference>
<dbReference type="InterPro" id="IPR001155">
    <property type="entry name" value="OxRdtase_FMN_N"/>
</dbReference>
<dbReference type="InterPro" id="IPR045247">
    <property type="entry name" value="Oye-like"/>
</dbReference>
<dbReference type="PANTHER" id="PTHR22893:SF96">
    <property type="entry name" value="12-OXOPHYTODIENOATE REDUCTASE 10-RELATED"/>
    <property type="match status" value="1"/>
</dbReference>
<dbReference type="PANTHER" id="PTHR22893">
    <property type="entry name" value="NADH OXIDOREDUCTASE-RELATED"/>
    <property type="match status" value="1"/>
</dbReference>
<dbReference type="Pfam" id="PF00724">
    <property type="entry name" value="Oxidored_FMN"/>
    <property type="match status" value="1"/>
</dbReference>
<dbReference type="SUPFAM" id="SSF51395">
    <property type="entry name" value="FMN-linked oxidoreductases"/>
    <property type="match status" value="1"/>
</dbReference>
<sequence length="317" mass="35012">MKSSPNQLSIFSYLLGICSLDTLLSPVGRKMDAISPLVILRMDNHISSFFSEFQPNGQAPISSTDKQVTPQVSHDGQVLEFAPPRRLKTEEIPNIVDDFRIAARNAIEAGFDGVEIHGANGYLIDQFMKDSVNDRTDAYGGGIENRCRFAAEVITAVAGEIGAHRLGVRLSPFADYMDCHDSDPEVLALRVIGLMNNLGVLYCHMIEPRMCVGAGEDGSKPVIAHGRLLPFRKAFRGTFMVNGGYDRDEGDKAVADGYADLVAYGRLFLANPDLPERFRRKAGLNKYDRSTFYTSDPVVGYTDYPFLDDQNSELATR</sequence>
<proteinExistence type="evidence at transcript level"/>
<accession>Q0JMR0</accession>